<name>TSPY3_HUMAN</name>
<dbReference type="EMBL" id="AC006158">
    <property type="status" value="NOT_ANNOTATED_CDS"/>
    <property type="molecule type" value="Genomic_DNA"/>
</dbReference>
<dbReference type="CCDS" id="CCDS48204.1"/>
<dbReference type="RefSeq" id="NP_001071165.2">
    <property type="nucleotide sequence ID" value="NM_001077697.2"/>
</dbReference>
<dbReference type="RefSeq" id="NP_001269398.1">
    <property type="nucleotide sequence ID" value="NM_001282469.2"/>
</dbReference>
<dbReference type="SMR" id="P0CV98"/>
<dbReference type="BioGRID" id="608573">
    <property type="interactions" value="7"/>
</dbReference>
<dbReference type="BioGRID" id="940742">
    <property type="interactions" value="3"/>
</dbReference>
<dbReference type="FunCoup" id="P0CV98">
    <property type="interactions" value="42"/>
</dbReference>
<dbReference type="IntAct" id="P0CV98">
    <property type="interactions" value="4"/>
</dbReference>
<dbReference type="BioMuta" id="TSPY3"/>
<dbReference type="DMDM" id="332321774"/>
<dbReference type="jPOST" id="P0CV98"/>
<dbReference type="MassIVE" id="P0CV98"/>
<dbReference type="PeptideAtlas" id="P0CV98"/>
<dbReference type="Antibodypedia" id="21859">
    <property type="antibodies" value="83 antibodies from 17 providers"/>
</dbReference>
<dbReference type="DNASU" id="728137"/>
<dbReference type="Ensembl" id="ENST00000457222.6">
    <property type="protein sequence ID" value="ENSP00000398163.2"/>
    <property type="gene ID" value="ENSG00000228927.10"/>
</dbReference>
<dbReference type="GeneID" id="100289087"/>
<dbReference type="GeneID" id="728137"/>
<dbReference type="KEGG" id="hsa:100289087"/>
<dbReference type="KEGG" id="hsa:728137"/>
<dbReference type="MANE-Select" id="ENST00000457222.6">
    <property type="protein sequence ID" value="ENSP00000398163.2"/>
    <property type="RefSeq nucleotide sequence ID" value="NM_001077697.2"/>
    <property type="RefSeq protein sequence ID" value="NP_001071165.2"/>
</dbReference>
<dbReference type="UCSC" id="uc033feo.1">
    <property type="organism name" value="human"/>
</dbReference>
<dbReference type="AGR" id="HGNC:33876"/>
<dbReference type="AGR" id="HGNC:37473"/>
<dbReference type="CTD" id="100289087"/>
<dbReference type="CTD" id="728137"/>
<dbReference type="DisGeNET" id="100289087"/>
<dbReference type="DisGeNET" id="728137"/>
<dbReference type="GeneCards" id="TSPY3"/>
<dbReference type="HGNC" id="HGNC:33876">
    <property type="gene designation" value="TSPY3"/>
</dbReference>
<dbReference type="HPA" id="ENSG00000228927">
    <property type="expression patterns" value="Tissue enriched (testis)"/>
</dbReference>
<dbReference type="neXtProt" id="NX_P0CV98"/>
<dbReference type="VEuPathDB" id="HostDB:ENSG00000228927"/>
<dbReference type="HOGENOM" id="CLU_051687_1_0_1"/>
<dbReference type="InParanoid" id="P0CV98"/>
<dbReference type="OMA" id="WVKVFVN"/>
<dbReference type="PAN-GO" id="P0CV98">
    <property type="GO annotations" value="4 GO annotations based on evolutionary models"/>
</dbReference>
<dbReference type="PhylomeDB" id="P0CV98"/>
<dbReference type="TreeFam" id="TF313386"/>
<dbReference type="SignaLink" id="P0CV98"/>
<dbReference type="BioGRID-ORCS" id="100289087">
    <property type="hits" value="3 hits in 123 CRISPR screens"/>
</dbReference>
<dbReference type="BioGRID-ORCS" id="728137">
    <property type="hits" value="13 hits in 207 CRISPR screens"/>
</dbReference>
<dbReference type="Pharos" id="P0CV98">
    <property type="development level" value="Tdark"/>
</dbReference>
<dbReference type="PRO" id="PR:P0CV98"/>
<dbReference type="Proteomes" id="UP000005640">
    <property type="component" value="Chromosome Y"/>
</dbReference>
<dbReference type="RNAct" id="P0CV98">
    <property type="molecule type" value="protein"/>
</dbReference>
<dbReference type="Bgee" id="ENSG00000228927">
    <property type="expression patterns" value="Expressed in male germ line stem cell (sensu Vertebrata) in testis and 39 other cell types or tissues"/>
</dbReference>
<dbReference type="ExpressionAtlas" id="P0CV98">
    <property type="expression patterns" value="baseline"/>
</dbReference>
<dbReference type="GO" id="GO:0000785">
    <property type="term" value="C:chromatin"/>
    <property type="evidence" value="ECO:0000318"/>
    <property type="project" value="GO_Central"/>
</dbReference>
<dbReference type="GO" id="GO:0005737">
    <property type="term" value="C:cytoplasm"/>
    <property type="evidence" value="ECO:0007669"/>
    <property type="project" value="UniProtKB-SubCell"/>
</dbReference>
<dbReference type="GO" id="GO:0005634">
    <property type="term" value="C:nucleus"/>
    <property type="evidence" value="ECO:0000318"/>
    <property type="project" value="GO_Central"/>
</dbReference>
<dbReference type="GO" id="GO:0003682">
    <property type="term" value="F:chromatin binding"/>
    <property type="evidence" value="ECO:0000318"/>
    <property type="project" value="GO_Central"/>
</dbReference>
<dbReference type="GO" id="GO:0042393">
    <property type="term" value="F:histone binding"/>
    <property type="evidence" value="ECO:0000318"/>
    <property type="project" value="GO_Central"/>
</dbReference>
<dbReference type="GO" id="GO:0030154">
    <property type="term" value="P:cell differentiation"/>
    <property type="evidence" value="ECO:0007669"/>
    <property type="project" value="UniProtKB-KW"/>
</dbReference>
<dbReference type="GO" id="GO:0007506">
    <property type="term" value="P:gonadal mesoderm development"/>
    <property type="evidence" value="ECO:0007669"/>
    <property type="project" value="UniProtKB-KW"/>
</dbReference>
<dbReference type="GO" id="GO:0006334">
    <property type="term" value="P:nucleosome assembly"/>
    <property type="evidence" value="ECO:0007669"/>
    <property type="project" value="InterPro"/>
</dbReference>
<dbReference type="GO" id="GO:0007283">
    <property type="term" value="P:spermatogenesis"/>
    <property type="evidence" value="ECO:0007669"/>
    <property type="project" value="UniProtKB-KW"/>
</dbReference>
<dbReference type="FunFam" id="1.20.5.1500:FF:000007">
    <property type="entry name" value="Testis-specific Y-encoded protein 10"/>
    <property type="match status" value="1"/>
</dbReference>
<dbReference type="FunFam" id="3.30.1120.90:FF:000002">
    <property type="entry name" value="Testis-specific Y-encoded-like protein 2"/>
    <property type="match status" value="1"/>
</dbReference>
<dbReference type="Gene3D" id="1.20.5.1500">
    <property type="match status" value="1"/>
</dbReference>
<dbReference type="Gene3D" id="3.30.1120.90">
    <property type="entry name" value="Nucleosome assembly protein"/>
    <property type="match status" value="1"/>
</dbReference>
<dbReference type="InterPro" id="IPR037231">
    <property type="entry name" value="NAP-like_sf"/>
</dbReference>
<dbReference type="InterPro" id="IPR002164">
    <property type="entry name" value="NAP_family"/>
</dbReference>
<dbReference type="PANTHER" id="PTHR11875">
    <property type="entry name" value="TESTIS-SPECIFIC Y-ENCODED PROTEIN"/>
    <property type="match status" value="1"/>
</dbReference>
<dbReference type="Pfam" id="PF00956">
    <property type="entry name" value="NAP"/>
    <property type="match status" value="1"/>
</dbReference>
<dbReference type="SUPFAM" id="SSF143113">
    <property type="entry name" value="NAP-like"/>
    <property type="match status" value="1"/>
</dbReference>
<feature type="chain" id="PRO_0000408001" description="Testis-specific Y-encoded protein 3">
    <location>
        <begin position="1"/>
        <end position="308"/>
    </location>
</feature>
<sequence length="308" mass="35101">MRPEGSLTYRVPERLRQGFCGVGRAAQALVCASAKEGTAFRMEAVQEGAAGVESEQAALGEEAVLLLDDIMAEVEVVAEEEGLVERREEAQRAQQAVPGPGPMTPESALEELLAVQVELEPVNAQARKAFSRQREKMERRRKPHLDRRGAVIQSVPGFWANVIANHPQMSALITDEDEDMLSYMVSLEVEEEKHPVHLCKIMLFFRSNPYFQNKVITKEYLVNITEYRASHSTPIEWYPDYEVEAYRRRHHNSSLNFFNWFSDHNFAGSNKIAEILCKDLWRNPLQYYKRMKPPEEGTETSGDSQLLS</sequence>
<accession>P0CV98</accession>
<comment type="function">
    <text evidence="1">May be involved in sperm differentiation and proliferation.</text>
</comment>
<comment type="subcellular location">
    <subcellularLocation>
        <location evidence="1">Cytoplasm</location>
    </subcellularLocation>
    <subcellularLocation>
        <location evidence="1">Nucleus</location>
    </subcellularLocation>
</comment>
<comment type="polymorphism">
    <text evidence="2">Maps to a tandemly repeated region on chromosome Yp11; additionally at least one copy is reported originating from Yq. The gene is thought to be present with an inter-individual variation in copy number and between 20 and 60 copies per Y chromosome are expected. 35 tandemly repeated gene copies on Yp11 originating from one individual have been reported (PubMed:12815422).</text>
</comment>
<comment type="similarity">
    <text evidence="3">Belongs to the nucleosome assembly protein (NAP) family.</text>
</comment>
<proteinExistence type="inferred from homology"/>
<evidence type="ECO:0000250" key="1">
    <source>
        <dbReference type="UniProtKB" id="Q01534"/>
    </source>
</evidence>
<evidence type="ECO:0000269" key="2">
    <source>
    </source>
</evidence>
<evidence type="ECO:0000305" key="3"/>
<organism>
    <name type="scientific">Homo sapiens</name>
    <name type="common">Human</name>
    <dbReference type="NCBI Taxonomy" id="9606"/>
    <lineage>
        <taxon>Eukaryota</taxon>
        <taxon>Metazoa</taxon>
        <taxon>Chordata</taxon>
        <taxon>Craniata</taxon>
        <taxon>Vertebrata</taxon>
        <taxon>Euteleostomi</taxon>
        <taxon>Mammalia</taxon>
        <taxon>Eutheria</taxon>
        <taxon>Euarchontoglires</taxon>
        <taxon>Primates</taxon>
        <taxon>Haplorrhini</taxon>
        <taxon>Catarrhini</taxon>
        <taxon>Hominidae</taxon>
        <taxon>Homo</taxon>
    </lineage>
</organism>
<reference key="1">
    <citation type="journal article" date="2003" name="Nature">
        <title>The male-specific region of the human Y chromosome is a mosaic of discrete sequence classes.</title>
        <authorList>
            <person name="Skaletsky H."/>
            <person name="Kuroda-Kawaguchi T."/>
            <person name="Minx P.J."/>
            <person name="Cordum H.S."/>
            <person name="Hillier L.W."/>
            <person name="Brown L.G."/>
            <person name="Repping S."/>
            <person name="Pyntikova T."/>
            <person name="Ali J."/>
            <person name="Bieri T."/>
            <person name="Chinwalla A."/>
            <person name="Delehaunty A."/>
            <person name="Delehaunty K."/>
            <person name="Du H."/>
            <person name="Fewell G."/>
            <person name="Fulton L."/>
            <person name="Fulton R."/>
            <person name="Graves T.A."/>
            <person name="Hou S.-F."/>
            <person name="Latrielle P."/>
            <person name="Leonard S."/>
            <person name="Mardis E."/>
            <person name="Maupin R."/>
            <person name="McPherson J."/>
            <person name="Miner T."/>
            <person name="Nash W."/>
            <person name="Nguyen C."/>
            <person name="Ozersky P."/>
            <person name="Pepin K."/>
            <person name="Rock S."/>
            <person name="Rohlfing T."/>
            <person name="Scott K."/>
            <person name="Schultz B."/>
            <person name="Strong C."/>
            <person name="Tin-Wollam A."/>
            <person name="Yang S.-P."/>
            <person name="Waterston R.H."/>
            <person name="Wilson R.K."/>
            <person name="Rozen S."/>
            <person name="Page D.C."/>
        </authorList>
    </citation>
    <scope>NUCLEOTIDE SEQUENCE [LARGE SCALE GENOMIC DNA]</scope>
</reference>
<keyword id="KW-0963">Cytoplasm</keyword>
<keyword id="KW-0217">Developmental protein</keyword>
<keyword id="KW-0221">Differentiation</keyword>
<keyword id="KW-0334">Gonadal differentiation</keyword>
<keyword id="KW-0539">Nucleus</keyword>
<keyword id="KW-1185">Reference proteome</keyword>
<keyword id="KW-0744">Spermatogenesis</keyword>
<gene>
    <name type="primary">TSPY3</name>
</gene>
<protein>
    <recommendedName>
        <fullName>Testis-specific Y-encoded protein 3</fullName>
    </recommendedName>
</protein>